<reference key="1">
    <citation type="journal article" date="2004" name="Nucleic Acids Res.">
        <title>Unique features revealed by the genome sequence of Acinetobacter sp. ADP1, a versatile and naturally transformation competent bacterium.</title>
        <authorList>
            <person name="Barbe V."/>
            <person name="Vallenet D."/>
            <person name="Fonknechten N."/>
            <person name="Kreimeyer A."/>
            <person name="Oztas S."/>
            <person name="Labarre L."/>
            <person name="Cruveiller S."/>
            <person name="Robert C."/>
            <person name="Duprat S."/>
            <person name="Wincker P."/>
            <person name="Ornston L.N."/>
            <person name="Weissenbach J."/>
            <person name="Marliere P."/>
            <person name="Cohen G.N."/>
            <person name="Medigue C."/>
        </authorList>
    </citation>
    <scope>NUCLEOTIDE SEQUENCE [LARGE SCALE GENOMIC DNA]</scope>
    <source>
        <strain>ATCC 33305 / BD413 / ADP1</strain>
    </source>
</reference>
<accession>Q6FE71</accession>
<dbReference type="EC" id="7.1.1.-" evidence="1"/>
<dbReference type="EMBL" id="CR543861">
    <property type="protein sequence ID" value="CAG67637.1"/>
    <property type="molecule type" value="Genomic_DNA"/>
</dbReference>
<dbReference type="SMR" id="Q6FE71"/>
<dbReference type="STRING" id="202950.GCA_001485005_02487"/>
<dbReference type="GeneID" id="45233196"/>
<dbReference type="KEGG" id="aci:ACIAD0730"/>
<dbReference type="eggNOG" id="COG0838">
    <property type="taxonomic scope" value="Bacteria"/>
</dbReference>
<dbReference type="HOGENOM" id="CLU_1486001_0_0_6"/>
<dbReference type="OrthoDB" id="9791970at2"/>
<dbReference type="BioCyc" id="ASP62977:ACIAD_RS03340-MONOMER"/>
<dbReference type="Proteomes" id="UP000000430">
    <property type="component" value="Chromosome"/>
</dbReference>
<dbReference type="GO" id="GO:0030964">
    <property type="term" value="C:NADH dehydrogenase complex"/>
    <property type="evidence" value="ECO:0007669"/>
    <property type="project" value="TreeGrafter"/>
</dbReference>
<dbReference type="GO" id="GO:0005886">
    <property type="term" value="C:plasma membrane"/>
    <property type="evidence" value="ECO:0007669"/>
    <property type="project" value="UniProtKB-SubCell"/>
</dbReference>
<dbReference type="GO" id="GO:0008137">
    <property type="term" value="F:NADH dehydrogenase (ubiquinone) activity"/>
    <property type="evidence" value="ECO:0007669"/>
    <property type="project" value="InterPro"/>
</dbReference>
<dbReference type="GO" id="GO:0050136">
    <property type="term" value="F:NADH:ubiquinone reductase (non-electrogenic) activity"/>
    <property type="evidence" value="ECO:0007669"/>
    <property type="project" value="UniProtKB-UniRule"/>
</dbReference>
<dbReference type="GO" id="GO:0048038">
    <property type="term" value="F:quinone binding"/>
    <property type="evidence" value="ECO:0007669"/>
    <property type="project" value="UniProtKB-KW"/>
</dbReference>
<dbReference type="Gene3D" id="1.20.58.1610">
    <property type="entry name" value="NADH:ubiquinone/plastoquinone oxidoreductase, chain 3"/>
    <property type="match status" value="1"/>
</dbReference>
<dbReference type="HAMAP" id="MF_01394">
    <property type="entry name" value="NDH1_NuoA"/>
    <property type="match status" value="1"/>
</dbReference>
<dbReference type="InterPro" id="IPR023043">
    <property type="entry name" value="NAD(P)H_OxRDtase_bac/plastid"/>
</dbReference>
<dbReference type="InterPro" id="IPR000440">
    <property type="entry name" value="NADH_UbQ/plastoQ_OxRdtase_su3"/>
</dbReference>
<dbReference type="InterPro" id="IPR038430">
    <property type="entry name" value="NDAH_ubi_oxred_su3_sf"/>
</dbReference>
<dbReference type="PANTHER" id="PTHR11058:SF21">
    <property type="entry name" value="NADH-QUINONE OXIDOREDUCTASE SUBUNIT A"/>
    <property type="match status" value="1"/>
</dbReference>
<dbReference type="PANTHER" id="PTHR11058">
    <property type="entry name" value="NADH-UBIQUINONE OXIDOREDUCTASE CHAIN 3"/>
    <property type="match status" value="1"/>
</dbReference>
<dbReference type="Pfam" id="PF00507">
    <property type="entry name" value="Oxidored_q4"/>
    <property type="match status" value="1"/>
</dbReference>
<protein>
    <recommendedName>
        <fullName evidence="1">NADH-quinone oxidoreductase subunit A</fullName>
        <ecNumber evidence="1">7.1.1.-</ecNumber>
    </recommendedName>
    <alternativeName>
        <fullName evidence="1">NADH dehydrogenase I subunit A</fullName>
    </alternativeName>
    <alternativeName>
        <fullName evidence="1">NDH-1 subunit A</fullName>
    </alternativeName>
    <alternativeName>
        <fullName evidence="1">NUO1</fullName>
    </alternativeName>
</protein>
<organism>
    <name type="scientific">Acinetobacter baylyi (strain ATCC 33305 / BD413 / ADP1)</name>
    <dbReference type="NCBI Taxonomy" id="62977"/>
    <lineage>
        <taxon>Bacteria</taxon>
        <taxon>Pseudomonadati</taxon>
        <taxon>Pseudomonadota</taxon>
        <taxon>Gammaproteobacteria</taxon>
        <taxon>Moraxellales</taxon>
        <taxon>Moraxellaceae</taxon>
        <taxon>Acinetobacter</taxon>
    </lineage>
</organism>
<keyword id="KW-0997">Cell inner membrane</keyword>
<keyword id="KW-1003">Cell membrane</keyword>
<keyword id="KW-0472">Membrane</keyword>
<keyword id="KW-0520">NAD</keyword>
<keyword id="KW-0874">Quinone</keyword>
<keyword id="KW-1278">Translocase</keyword>
<keyword id="KW-0812">Transmembrane</keyword>
<keyword id="KW-1133">Transmembrane helix</keyword>
<keyword id="KW-0813">Transport</keyword>
<keyword id="KW-0830">Ubiquinone</keyword>
<comment type="function">
    <text evidence="1">NDH-1 shuttles electrons from NADH, via FMN and iron-sulfur (Fe-S) centers, to quinones in the respiratory chain. The immediate electron acceptor for the enzyme in this species is believed to be ubiquinone. Couples the redox reaction to proton translocation (for every two electrons transferred, four hydrogen ions are translocated across the cytoplasmic membrane), and thus conserves the redox energy in a proton gradient.</text>
</comment>
<comment type="catalytic activity">
    <reaction evidence="1">
        <text>a quinone + NADH + 5 H(+)(in) = a quinol + NAD(+) + 4 H(+)(out)</text>
        <dbReference type="Rhea" id="RHEA:57888"/>
        <dbReference type="ChEBI" id="CHEBI:15378"/>
        <dbReference type="ChEBI" id="CHEBI:24646"/>
        <dbReference type="ChEBI" id="CHEBI:57540"/>
        <dbReference type="ChEBI" id="CHEBI:57945"/>
        <dbReference type="ChEBI" id="CHEBI:132124"/>
    </reaction>
</comment>
<comment type="subunit">
    <text evidence="1">NDH-1 is composed of 14 different subunits. Subunits NuoA, H, J, K, L, M, N constitute the membrane sector of the complex.</text>
</comment>
<comment type="subcellular location">
    <subcellularLocation>
        <location evidence="1">Cell inner membrane</location>
        <topology evidence="1">Multi-pass membrane protein</topology>
    </subcellularLocation>
</comment>
<comment type="similarity">
    <text evidence="1">Belongs to the complex I subunit 3 family.</text>
</comment>
<proteinExistence type="inferred from homology"/>
<feature type="chain" id="PRO_0000362616" description="NADH-quinone oxidoreductase subunit A">
    <location>
        <begin position="1"/>
        <end position="183"/>
    </location>
</feature>
<feature type="transmembrane region" description="Helical" evidence="1">
    <location>
        <begin position="11"/>
        <end position="31"/>
    </location>
</feature>
<feature type="transmembrane region" description="Helical" evidence="1">
    <location>
        <begin position="63"/>
        <end position="83"/>
    </location>
</feature>
<feature type="transmembrane region" description="Helical" evidence="1">
    <location>
        <begin position="98"/>
        <end position="118"/>
    </location>
</feature>
<feature type="region of interest" description="Disordered" evidence="2">
    <location>
        <begin position="160"/>
        <end position="183"/>
    </location>
</feature>
<feature type="compositionally biased region" description="Polar residues" evidence="2">
    <location>
        <begin position="164"/>
        <end position="183"/>
    </location>
</feature>
<evidence type="ECO:0000255" key="1">
    <source>
        <dbReference type="HAMAP-Rule" id="MF_01394"/>
    </source>
</evidence>
<evidence type="ECO:0000256" key="2">
    <source>
        <dbReference type="SAM" id="MobiDB-lite"/>
    </source>
</evidence>
<gene>
    <name evidence="1" type="primary">nuoA</name>
    <name type="ordered locus">ACIAD0730</name>
</gene>
<name>NUOA_ACIAD</name>
<sequence length="183" mass="20052">MSAITPYDWAIIAFVIGVTFLCVFMLTVPLLLGGKSWGRAKQEQFESGVVSAGGARIRLSAKFYLVAIFFVVFDLEALYLYAWATSVREVGWMGFTTMVIFVVDLLIALIYVFATGALTWSPSDRRKAAGIKPKIGSPNMNIAEITRFNSIEELVIDPTGHIPAQSSGRMKSKTSTAPSSKQE</sequence>